<reference key="1">
    <citation type="journal article" date="2002" name="Proc. Natl. Acad. Sci. U.S.A.">
        <title>The genome sequence of the facultative intracellular pathogen Brucella melitensis.</title>
        <authorList>
            <person name="DelVecchio V.G."/>
            <person name="Kapatral V."/>
            <person name="Redkar R.J."/>
            <person name="Patra G."/>
            <person name="Mujer C."/>
            <person name="Los T."/>
            <person name="Ivanova N."/>
            <person name="Anderson I."/>
            <person name="Bhattacharyya A."/>
            <person name="Lykidis A."/>
            <person name="Reznik G."/>
            <person name="Jablonski L."/>
            <person name="Larsen N."/>
            <person name="D'Souza M."/>
            <person name="Bernal A."/>
            <person name="Mazur M."/>
            <person name="Goltsman E."/>
            <person name="Selkov E."/>
            <person name="Elzer P.H."/>
            <person name="Hagius S."/>
            <person name="O'Callaghan D."/>
            <person name="Letesson J.-J."/>
            <person name="Haselkorn R."/>
            <person name="Kyrpides N.C."/>
            <person name="Overbeek R."/>
        </authorList>
    </citation>
    <scope>NUCLEOTIDE SEQUENCE [LARGE SCALE GENOMIC DNA]</scope>
    <source>
        <strain>ATCC 23456 / CCUG 17765 / NCTC 10094 / 16M</strain>
    </source>
</reference>
<sequence length="353" mass="37574">MASGKMRIVVLFGGRSAEHDVSVLSATNVMNALDPAKYEAVPVFVTRAGQWLLSRFVNGALEKPSSGAELCLVPGGCGRAIVVPDAGAPYEADKIDIIFPVLHGLHGEDGAVQGLAQVARVPLAGCGIPGSANALDKDIAKRLVNEAGLSTAKSVTITREEVPAFSALEQALGLPIFIKPARQGSSVGVHKVVTEADYQAAMSDGFIYDDKLLAEEFIQAREVECGVLEDEGGALFVSRAGEIVPAESHCFYSYDAKYIDADGTEIKVPAELPEQVENEIRAIAAKAFRVLGCDSMARVDFFVTADRRIVLNEINTIPGFTDMSMYFKVMAVSGVSYPEIINRLVAHGLARGS</sequence>
<proteinExistence type="inferred from homology"/>
<name>DDLA_BRUME</name>
<protein>
    <recommendedName>
        <fullName evidence="2">D-alanine--D-alanine ligase A</fullName>
        <ecNumber evidence="2">6.3.2.4</ecNumber>
    </recommendedName>
    <alternativeName>
        <fullName evidence="2">D-Ala-D-Ala ligase A</fullName>
    </alternativeName>
    <alternativeName>
        <fullName evidence="2">D-alanylalanine synthetaseA</fullName>
    </alternativeName>
</protein>
<dbReference type="EC" id="6.3.2.4" evidence="2"/>
<dbReference type="EMBL" id="AE008917">
    <property type="protein sequence ID" value="AAL51908.1"/>
    <property type="status" value="ALT_INIT"/>
    <property type="molecule type" value="Genomic_DNA"/>
</dbReference>
<dbReference type="PIR" id="AI3342">
    <property type="entry name" value="AI3342"/>
</dbReference>
<dbReference type="RefSeq" id="WP_004683939.1">
    <property type="nucleotide sequence ID" value="NC_003317.1"/>
</dbReference>
<dbReference type="SMR" id="Q8YHR9"/>
<dbReference type="GeneID" id="29593528"/>
<dbReference type="KEGG" id="bme:BMEI0727"/>
<dbReference type="KEGG" id="bmel:DK63_699"/>
<dbReference type="PATRIC" id="fig|224914.52.peg.729"/>
<dbReference type="eggNOG" id="COG1181">
    <property type="taxonomic scope" value="Bacteria"/>
</dbReference>
<dbReference type="UniPathway" id="UPA00219"/>
<dbReference type="Proteomes" id="UP000000419">
    <property type="component" value="Chromosome I"/>
</dbReference>
<dbReference type="GO" id="GO:0005829">
    <property type="term" value="C:cytosol"/>
    <property type="evidence" value="ECO:0007669"/>
    <property type="project" value="TreeGrafter"/>
</dbReference>
<dbReference type="GO" id="GO:0005524">
    <property type="term" value="F:ATP binding"/>
    <property type="evidence" value="ECO:0007669"/>
    <property type="project" value="UniProtKB-KW"/>
</dbReference>
<dbReference type="GO" id="GO:0008716">
    <property type="term" value="F:D-alanine-D-alanine ligase activity"/>
    <property type="evidence" value="ECO:0007669"/>
    <property type="project" value="UniProtKB-UniRule"/>
</dbReference>
<dbReference type="GO" id="GO:0046872">
    <property type="term" value="F:metal ion binding"/>
    <property type="evidence" value="ECO:0007669"/>
    <property type="project" value="UniProtKB-KW"/>
</dbReference>
<dbReference type="GO" id="GO:0071555">
    <property type="term" value="P:cell wall organization"/>
    <property type="evidence" value="ECO:0007669"/>
    <property type="project" value="UniProtKB-KW"/>
</dbReference>
<dbReference type="GO" id="GO:0009252">
    <property type="term" value="P:peptidoglycan biosynthetic process"/>
    <property type="evidence" value="ECO:0007669"/>
    <property type="project" value="UniProtKB-UniRule"/>
</dbReference>
<dbReference type="GO" id="GO:0008360">
    <property type="term" value="P:regulation of cell shape"/>
    <property type="evidence" value="ECO:0007669"/>
    <property type="project" value="UniProtKB-KW"/>
</dbReference>
<dbReference type="FunFam" id="3.30.470.20:FF:000008">
    <property type="entry name" value="D-alanine--D-alanine ligase"/>
    <property type="match status" value="1"/>
</dbReference>
<dbReference type="Gene3D" id="3.40.50.20">
    <property type="match status" value="1"/>
</dbReference>
<dbReference type="Gene3D" id="3.30.1490.20">
    <property type="entry name" value="ATP-grasp fold, A domain"/>
    <property type="match status" value="1"/>
</dbReference>
<dbReference type="Gene3D" id="3.30.470.20">
    <property type="entry name" value="ATP-grasp fold, B domain"/>
    <property type="match status" value="1"/>
</dbReference>
<dbReference type="HAMAP" id="MF_00047">
    <property type="entry name" value="Dala_Dala_lig"/>
    <property type="match status" value="1"/>
</dbReference>
<dbReference type="InterPro" id="IPR011761">
    <property type="entry name" value="ATP-grasp"/>
</dbReference>
<dbReference type="InterPro" id="IPR013815">
    <property type="entry name" value="ATP_grasp_subdomain_1"/>
</dbReference>
<dbReference type="InterPro" id="IPR000291">
    <property type="entry name" value="D-Ala_lig_Van_CS"/>
</dbReference>
<dbReference type="InterPro" id="IPR005905">
    <property type="entry name" value="D_ala_D_ala"/>
</dbReference>
<dbReference type="InterPro" id="IPR011095">
    <property type="entry name" value="Dala_Dala_lig_C"/>
</dbReference>
<dbReference type="InterPro" id="IPR011127">
    <property type="entry name" value="Dala_Dala_lig_N"/>
</dbReference>
<dbReference type="InterPro" id="IPR016185">
    <property type="entry name" value="PreATP-grasp_dom_sf"/>
</dbReference>
<dbReference type="NCBIfam" id="TIGR01205">
    <property type="entry name" value="D_ala_D_alaTIGR"/>
    <property type="match status" value="1"/>
</dbReference>
<dbReference type="NCBIfam" id="NF002528">
    <property type="entry name" value="PRK01966.1-4"/>
    <property type="match status" value="1"/>
</dbReference>
<dbReference type="PANTHER" id="PTHR23132">
    <property type="entry name" value="D-ALANINE--D-ALANINE LIGASE"/>
    <property type="match status" value="1"/>
</dbReference>
<dbReference type="PANTHER" id="PTHR23132:SF25">
    <property type="entry name" value="D-ALANINE--D-ALANINE LIGASE A"/>
    <property type="match status" value="1"/>
</dbReference>
<dbReference type="Pfam" id="PF07478">
    <property type="entry name" value="Dala_Dala_lig_C"/>
    <property type="match status" value="1"/>
</dbReference>
<dbReference type="Pfam" id="PF01820">
    <property type="entry name" value="Dala_Dala_lig_N"/>
    <property type="match status" value="1"/>
</dbReference>
<dbReference type="PIRSF" id="PIRSF039102">
    <property type="entry name" value="Ddl/VanB"/>
    <property type="match status" value="1"/>
</dbReference>
<dbReference type="SUPFAM" id="SSF56059">
    <property type="entry name" value="Glutathione synthetase ATP-binding domain-like"/>
    <property type="match status" value="1"/>
</dbReference>
<dbReference type="SUPFAM" id="SSF52440">
    <property type="entry name" value="PreATP-grasp domain"/>
    <property type="match status" value="1"/>
</dbReference>
<dbReference type="PROSITE" id="PS50975">
    <property type="entry name" value="ATP_GRASP"/>
    <property type="match status" value="1"/>
</dbReference>
<dbReference type="PROSITE" id="PS00843">
    <property type="entry name" value="DALA_DALA_LIGASE_1"/>
    <property type="match status" value="1"/>
</dbReference>
<dbReference type="PROSITE" id="PS00844">
    <property type="entry name" value="DALA_DALA_LIGASE_2"/>
    <property type="match status" value="1"/>
</dbReference>
<keyword id="KW-0067">ATP-binding</keyword>
<keyword id="KW-0133">Cell shape</keyword>
<keyword id="KW-0961">Cell wall biogenesis/degradation</keyword>
<keyword id="KW-0963">Cytoplasm</keyword>
<keyword id="KW-0436">Ligase</keyword>
<keyword id="KW-0460">Magnesium</keyword>
<keyword id="KW-0464">Manganese</keyword>
<keyword id="KW-0479">Metal-binding</keyword>
<keyword id="KW-0547">Nucleotide-binding</keyword>
<keyword id="KW-0573">Peptidoglycan synthesis</keyword>
<evidence type="ECO:0000250" key="1"/>
<evidence type="ECO:0000255" key="2">
    <source>
        <dbReference type="HAMAP-Rule" id="MF_00047"/>
    </source>
</evidence>
<evidence type="ECO:0000305" key="3"/>
<organism>
    <name type="scientific">Brucella melitensis biotype 1 (strain ATCC 23456 / CCUG 17765 / NCTC 10094 / 16M)</name>
    <dbReference type="NCBI Taxonomy" id="224914"/>
    <lineage>
        <taxon>Bacteria</taxon>
        <taxon>Pseudomonadati</taxon>
        <taxon>Pseudomonadota</taxon>
        <taxon>Alphaproteobacteria</taxon>
        <taxon>Hyphomicrobiales</taxon>
        <taxon>Brucellaceae</taxon>
        <taxon>Brucella/Ochrobactrum group</taxon>
        <taxon>Brucella</taxon>
    </lineage>
</organism>
<comment type="function">
    <text evidence="2">Cell wall formation.</text>
</comment>
<comment type="catalytic activity">
    <reaction evidence="2">
        <text>2 D-alanine + ATP = D-alanyl-D-alanine + ADP + phosphate + H(+)</text>
        <dbReference type="Rhea" id="RHEA:11224"/>
        <dbReference type="ChEBI" id="CHEBI:15378"/>
        <dbReference type="ChEBI" id="CHEBI:30616"/>
        <dbReference type="ChEBI" id="CHEBI:43474"/>
        <dbReference type="ChEBI" id="CHEBI:57416"/>
        <dbReference type="ChEBI" id="CHEBI:57822"/>
        <dbReference type="ChEBI" id="CHEBI:456216"/>
        <dbReference type="EC" id="6.3.2.4"/>
    </reaction>
</comment>
<comment type="cofactor">
    <cofactor evidence="1">
        <name>Mg(2+)</name>
        <dbReference type="ChEBI" id="CHEBI:18420"/>
    </cofactor>
    <cofactor evidence="1">
        <name>Mn(2+)</name>
        <dbReference type="ChEBI" id="CHEBI:29035"/>
    </cofactor>
    <text evidence="1">Binds 2 magnesium or manganese ions per subunit.</text>
</comment>
<comment type="pathway">
    <text evidence="2">Cell wall biogenesis; peptidoglycan biosynthesis.</text>
</comment>
<comment type="subcellular location">
    <subcellularLocation>
        <location evidence="2">Cytoplasm</location>
    </subcellularLocation>
</comment>
<comment type="similarity">
    <text evidence="2">Belongs to the D-alanine--D-alanine ligase family.</text>
</comment>
<comment type="sequence caution" evidence="3">
    <conflict type="erroneous initiation">
        <sequence resource="EMBL-CDS" id="AAL51908"/>
    </conflict>
</comment>
<accession>Q8YHR9</accession>
<gene>
    <name evidence="2" type="primary">ddlA</name>
    <name type="ordered locus">BMEI0727</name>
</gene>
<feature type="chain" id="PRO_0000177794" description="D-alanine--D-alanine ligase A">
    <location>
        <begin position="1"/>
        <end position="353"/>
    </location>
</feature>
<feature type="domain" description="ATP-grasp" evidence="2">
    <location>
        <begin position="141"/>
        <end position="346"/>
    </location>
</feature>
<feature type="binding site" evidence="2">
    <location>
        <begin position="169"/>
        <end position="224"/>
    </location>
    <ligand>
        <name>ATP</name>
        <dbReference type="ChEBI" id="CHEBI:30616"/>
    </ligand>
</feature>
<feature type="binding site" evidence="2">
    <location>
        <position position="300"/>
    </location>
    <ligand>
        <name>Mg(2+)</name>
        <dbReference type="ChEBI" id="CHEBI:18420"/>
        <label>1</label>
    </ligand>
</feature>
<feature type="binding site" evidence="2">
    <location>
        <position position="313"/>
    </location>
    <ligand>
        <name>Mg(2+)</name>
        <dbReference type="ChEBI" id="CHEBI:18420"/>
        <label>1</label>
    </ligand>
</feature>
<feature type="binding site" evidence="2">
    <location>
        <position position="313"/>
    </location>
    <ligand>
        <name>Mg(2+)</name>
        <dbReference type="ChEBI" id="CHEBI:18420"/>
        <label>2</label>
    </ligand>
</feature>
<feature type="binding site" evidence="2">
    <location>
        <position position="315"/>
    </location>
    <ligand>
        <name>Mg(2+)</name>
        <dbReference type="ChEBI" id="CHEBI:18420"/>
        <label>2</label>
    </ligand>
</feature>